<feature type="initiator methionine" description="Removed" evidence="1">
    <location>
        <position position="1"/>
    </location>
</feature>
<feature type="chain" id="PRO_0000135427" description="Glutamine--fructose-6-phosphate aminotransferase [isomerizing]">
    <location>
        <begin position="2"/>
        <end position="590"/>
    </location>
</feature>
<feature type="domain" description="Glutamine amidotransferase type-2" evidence="1">
    <location>
        <begin position="2"/>
        <end position="219"/>
    </location>
</feature>
<feature type="domain" description="SIS 1" evidence="1">
    <location>
        <begin position="277"/>
        <end position="415"/>
    </location>
</feature>
<feature type="domain" description="SIS 2" evidence="1">
    <location>
        <begin position="438"/>
        <end position="580"/>
    </location>
</feature>
<feature type="active site" description="Nucleophile; for GATase activity" evidence="1">
    <location>
        <position position="2"/>
    </location>
</feature>
<feature type="active site" description="For Fru-6P isomerization activity" evidence="1">
    <location>
        <position position="585"/>
    </location>
</feature>
<gene>
    <name evidence="1" type="primary">glmS</name>
    <name type="ordered locus">MTH_171</name>
</gene>
<dbReference type="EC" id="2.6.1.16" evidence="1"/>
<dbReference type="EMBL" id="AE000666">
    <property type="protein sequence ID" value="AAB84677.1"/>
    <property type="molecule type" value="Genomic_DNA"/>
</dbReference>
<dbReference type="PIR" id="G69095">
    <property type="entry name" value="G69095"/>
</dbReference>
<dbReference type="RefSeq" id="WP_010875810.1">
    <property type="nucleotide sequence ID" value="NC_000916.1"/>
</dbReference>
<dbReference type="SMR" id="O26273"/>
<dbReference type="FunCoup" id="O26273">
    <property type="interactions" value="59"/>
</dbReference>
<dbReference type="STRING" id="187420.MTH_171"/>
<dbReference type="PaxDb" id="187420-MTH_171"/>
<dbReference type="EnsemblBacteria" id="AAB84677">
    <property type="protein sequence ID" value="AAB84677"/>
    <property type="gene ID" value="MTH_171"/>
</dbReference>
<dbReference type="GeneID" id="1470132"/>
<dbReference type="GeneID" id="77400731"/>
<dbReference type="KEGG" id="mth:MTH_171"/>
<dbReference type="PATRIC" id="fig|187420.15.peg.144"/>
<dbReference type="HOGENOM" id="CLU_012520_5_2_2"/>
<dbReference type="InParanoid" id="O26273"/>
<dbReference type="Proteomes" id="UP000005223">
    <property type="component" value="Chromosome"/>
</dbReference>
<dbReference type="GO" id="GO:0005737">
    <property type="term" value="C:cytoplasm"/>
    <property type="evidence" value="ECO:0007669"/>
    <property type="project" value="UniProtKB-SubCell"/>
</dbReference>
<dbReference type="GO" id="GO:0097367">
    <property type="term" value="F:carbohydrate derivative binding"/>
    <property type="evidence" value="ECO:0007669"/>
    <property type="project" value="InterPro"/>
</dbReference>
<dbReference type="GO" id="GO:0004360">
    <property type="term" value="F:glutamine-fructose-6-phosphate transaminase (isomerizing) activity"/>
    <property type="evidence" value="ECO:0007669"/>
    <property type="project" value="UniProtKB-UniRule"/>
</dbReference>
<dbReference type="GO" id="GO:0005975">
    <property type="term" value="P:carbohydrate metabolic process"/>
    <property type="evidence" value="ECO:0007669"/>
    <property type="project" value="UniProtKB-UniRule"/>
</dbReference>
<dbReference type="GO" id="GO:0006002">
    <property type="term" value="P:fructose 6-phosphate metabolic process"/>
    <property type="evidence" value="ECO:0007669"/>
    <property type="project" value="TreeGrafter"/>
</dbReference>
<dbReference type="GO" id="GO:0006487">
    <property type="term" value="P:protein N-linked glycosylation"/>
    <property type="evidence" value="ECO:0007669"/>
    <property type="project" value="TreeGrafter"/>
</dbReference>
<dbReference type="GO" id="GO:0006047">
    <property type="term" value="P:UDP-N-acetylglucosamine metabolic process"/>
    <property type="evidence" value="ECO:0007669"/>
    <property type="project" value="TreeGrafter"/>
</dbReference>
<dbReference type="CDD" id="cd00714">
    <property type="entry name" value="GFAT"/>
    <property type="match status" value="1"/>
</dbReference>
<dbReference type="CDD" id="cd05008">
    <property type="entry name" value="SIS_GlmS_GlmD_1"/>
    <property type="match status" value="1"/>
</dbReference>
<dbReference type="CDD" id="cd05009">
    <property type="entry name" value="SIS_GlmS_GlmD_2"/>
    <property type="match status" value="1"/>
</dbReference>
<dbReference type="FunFam" id="3.40.50.10490:FF:000001">
    <property type="entry name" value="Glutamine--fructose-6-phosphate aminotransferase [isomerizing]"/>
    <property type="match status" value="1"/>
</dbReference>
<dbReference type="FunFam" id="3.40.50.10490:FF:000002">
    <property type="entry name" value="Glutamine--fructose-6-phosphate aminotransferase [isomerizing]"/>
    <property type="match status" value="1"/>
</dbReference>
<dbReference type="FunFam" id="3.60.20.10:FF:000006">
    <property type="entry name" value="Glutamine--fructose-6-phosphate aminotransferase [isomerizing]"/>
    <property type="match status" value="1"/>
</dbReference>
<dbReference type="Gene3D" id="3.40.50.10490">
    <property type="entry name" value="Glucose-6-phosphate isomerase like protein, domain 1"/>
    <property type="match status" value="2"/>
</dbReference>
<dbReference type="Gene3D" id="3.60.20.10">
    <property type="entry name" value="Glutamine Phosphoribosylpyrophosphate, subunit 1, domain 1"/>
    <property type="match status" value="1"/>
</dbReference>
<dbReference type="HAMAP" id="MF_00164">
    <property type="entry name" value="GlmS"/>
    <property type="match status" value="1"/>
</dbReference>
<dbReference type="InterPro" id="IPR017932">
    <property type="entry name" value="GATase_2_dom"/>
</dbReference>
<dbReference type="InterPro" id="IPR005855">
    <property type="entry name" value="GFAT"/>
</dbReference>
<dbReference type="InterPro" id="IPR047084">
    <property type="entry name" value="GFAT_N"/>
</dbReference>
<dbReference type="InterPro" id="IPR035466">
    <property type="entry name" value="GlmS/AgaS_SIS"/>
</dbReference>
<dbReference type="InterPro" id="IPR035490">
    <property type="entry name" value="GlmS/FrlB_SIS"/>
</dbReference>
<dbReference type="InterPro" id="IPR029055">
    <property type="entry name" value="Ntn_hydrolases_N"/>
</dbReference>
<dbReference type="InterPro" id="IPR001347">
    <property type="entry name" value="SIS_dom"/>
</dbReference>
<dbReference type="InterPro" id="IPR046348">
    <property type="entry name" value="SIS_dom_sf"/>
</dbReference>
<dbReference type="NCBIfam" id="TIGR01135">
    <property type="entry name" value="glmS"/>
    <property type="match status" value="1"/>
</dbReference>
<dbReference type="NCBIfam" id="NF001484">
    <property type="entry name" value="PRK00331.1"/>
    <property type="match status" value="1"/>
</dbReference>
<dbReference type="PANTHER" id="PTHR10937">
    <property type="entry name" value="GLUCOSAMINE--FRUCTOSE-6-PHOSPHATE AMINOTRANSFERASE, ISOMERIZING"/>
    <property type="match status" value="1"/>
</dbReference>
<dbReference type="PANTHER" id="PTHR10937:SF0">
    <property type="entry name" value="GLUTAMINE--FRUCTOSE-6-PHOSPHATE TRANSAMINASE (ISOMERIZING)"/>
    <property type="match status" value="1"/>
</dbReference>
<dbReference type="Pfam" id="PF13522">
    <property type="entry name" value="GATase_6"/>
    <property type="match status" value="1"/>
</dbReference>
<dbReference type="Pfam" id="PF01380">
    <property type="entry name" value="SIS"/>
    <property type="match status" value="2"/>
</dbReference>
<dbReference type="SUPFAM" id="SSF56235">
    <property type="entry name" value="N-terminal nucleophile aminohydrolases (Ntn hydrolases)"/>
    <property type="match status" value="1"/>
</dbReference>
<dbReference type="SUPFAM" id="SSF53697">
    <property type="entry name" value="SIS domain"/>
    <property type="match status" value="1"/>
</dbReference>
<dbReference type="PROSITE" id="PS51278">
    <property type="entry name" value="GATASE_TYPE_2"/>
    <property type="match status" value="1"/>
</dbReference>
<dbReference type="PROSITE" id="PS51464">
    <property type="entry name" value="SIS"/>
    <property type="match status" value="2"/>
</dbReference>
<protein>
    <recommendedName>
        <fullName evidence="1">Glutamine--fructose-6-phosphate aminotransferase [isomerizing]</fullName>
        <ecNumber evidence="1">2.6.1.16</ecNumber>
    </recommendedName>
    <alternativeName>
        <fullName evidence="1">D-fructose-6-phosphate amidotransferase</fullName>
    </alternativeName>
    <alternativeName>
        <fullName evidence="1">GFAT</fullName>
    </alternativeName>
    <alternativeName>
        <fullName evidence="1">Glucosamine-6-phosphate synthase</fullName>
    </alternativeName>
    <alternativeName>
        <fullName evidence="1">Hexosephosphate aminotransferase</fullName>
    </alternativeName>
    <alternativeName>
        <fullName evidence="1">L-glutamine--D-fructose-6-phosphate amidotransferase</fullName>
    </alternativeName>
</protein>
<reference key="1">
    <citation type="journal article" date="1997" name="J. Bacteriol.">
        <title>Complete genome sequence of Methanobacterium thermoautotrophicum deltaH: functional analysis and comparative genomics.</title>
        <authorList>
            <person name="Smith D.R."/>
            <person name="Doucette-Stamm L.A."/>
            <person name="Deloughery C."/>
            <person name="Lee H.-M."/>
            <person name="Dubois J."/>
            <person name="Aldredge T."/>
            <person name="Bashirzadeh R."/>
            <person name="Blakely D."/>
            <person name="Cook R."/>
            <person name="Gilbert K."/>
            <person name="Harrison D."/>
            <person name="Hoang L."/>
            <person name="Keagle P."/>
            <person name="Lumm W."/>
            <person name="Pothier B."/>
            <person name="Qiu D."/>
            <person name="Spadafora R."/>
            <person name="Vicare R."/>
            <person name="Wang Y."/>
            <person name="Wierzbowski J."/>
            <person name="Gibson R."/>
            <person name="Jiwani N."/>
            <person name="Caruso A."/>
            <person name="Bush D."/>
            <person name="Safer H."/>
            <person name="Patwell D."/>
            <person name="Prabhakar S."/>
            <person name="McDougall S."/>
            <person name="Shimer G."/>
            <person name="Goyal A."/>
            <person name="Pietrovski S."/>
            <person name="Church G.M."/>
            <person name="Daniels C.J."/>
            <person name="Mao J.-I."/>
            <person name="Rice P."/>
            <person name="Noelling J."/>
            <person name="Reeve J.N."/>
        </authorList>
    </citation>
    <scope>NUCLEOTIDE SEQUENCE [LARGE SCALE GENOMIC DNA]</scope>
    <source>
        <strain>ATCC 29096 / DSM 1053 / JCM 10044 / NBRC 100330 / Delta H</strain>
    </source>
</reference>
<sequence>MCGIVACILKDGSAAPVLLECVRRLEYRGYDSVGIATSDPMIRIKKDSGKIDEVDAELDLADLPGTMGIAHVRWATHGLPTAENAHPHTDCSGEIAVVHNGIIENYLEVKEELESEGHIFRSETDTEVIPHLIEKYMDEGMDLEAATATALRKLRGAYAIAAVSSREPGRIVGARKESPLIVGVGEGEYFLASDVPAILNHTSRVIYLDDGEMVILDGDLRVTDMEGNTVEKEVHSIDWSADMAEKGGYDHFMLKEIHEEPSAVRDTLTEWDEVLGVVEEIGEVERICFVACGTSYHASLVGKYLFESLLGIPTDVILASEFRYSAGALNDRTLAIFISQSGETADTLNALRAANSRAKTLAIVNVLGSSATREAQHVLYTRAGPEIGVAATKTYVSQLTVIYMLVAAMGAPELMDRLERVPEFMERALEDEDGIKELAATCSDVSDFFFIGRGFAYPTALEGALKLKEITYIHGEGYAAGELKHGPLALIDNGVPVVAISPPGPCHDKTLSNVEEVRARGARVIGVGSISDESLRKEADDFIGLDPEVDDVISPLVYIVPLQLLSYHVSVERGLDPDKPKNLAKCVTVE</sequence>
<keyword id="KW-0032">Aminotransferase</keyword>
<keyword id="KW-0963">Cytoplasm</keyword>
<keyword id="KW-0315">Glutamine amidotransferase</keyword>
<keyword id="KW-1185">Reference proteome</keyword>
<keyword id="KW-0677">Repeat</keyword>
<keyword id="KW-0808">Transferase</keyword>
<organism>
    <name type="scientific">Methanothermobacter thermautotrophicus (strain ATCC 29096 / DSM 1053 / JCM 10044 / NBRC 100330 / Delta H)</name>
    <name type="common">Methanobacterium thermoautotrophicum</name>
    <dbReference type="NCBI Taxonomy" id="187420"/>
    <lineage>
        <taxon>Archaea</taxon>
        <taxon>Methanobacteriati</taxon>
        <taxon>Methanobacteriota</taxon>
        <taxon>Methanomada group</taxon>
        <taxon>Methanobacteria</taxon>
        <taxon>Methanobacteriales</taxon>
        <taxon>Methanobacteriaceae</taxon>
        <taxon>Methanothermobacter</taxon>
    </lineage>
</organism>
<proteinExistence type="inferred from homology"/>
<evidence type="ECO:0000255" key="1">
    <source>
        <dbReference type="HAMAP-Rule" id="MF_00164"/>
    </source>
</evidence>
<accession>O26273</accession>
<comment type="function">
    <text evidence="1">Catalyzes the first step in hexosamine metabolism, converting fructose-6P into glucosamine-6P using glutamine as a nitrogen source.</text>
</comment>
<comment type="catalytic activity">
    <reaction evidence="1">
        <text>D-fructose 6-phosphate + L-glutamine = D-glucosamine 6-phosphate + L-glutamate</text>
        <dbReference type="Rhea" id="RHEA:13237"/>
        <dbReference type="ChEBI" id="CHEBI:29985"/>
        <dbReference type="ChEBI" id="CHEBI:58359"/>
        <dbReference type="ChEBI" id="CHEBI:58725"/>
        <dbReference type="ChEBI" id="CHEBI:61527"/>
        <dbReference type="EC" id="2.6.1.16"/>
    </reaction>
</comment>
<comment type="subunit">
    <text evidence="1">Homodimer.</text>
</comment>
<comment type="subcellular location">
    <subcellularLocation>
        <location evidence="1">Cytoplasm</location>
    </subcellularLocation>
</comment>
<name>GLMS_METTH</name>